<proteinExistence type="evidence at transcript level"/>
<organism>
    <name type="scientific">Meriones unguiculatus</name>
    <name type="common">Mongolian jird</name>
    <name type="synonym">Gerbillus unguiculatus</name>
    <dbReference type="NCBI Taxonomy" id="10047"/>
    <lineage>
        <taxon>Eukaryota</taxon>
        <taxon>Metazoa</taxon>
        <taxon>Chordata</taxon>
        <taxon>Craniata</taxon>
        <taxon>Vertebrata</taxon>
        <taxon>Euteleostomi</taxon>
        <taxon>Mammalia</taxon>
        <taxon>Eutheria</taxon>
        <taxon>Euarchontoglires</taxon>
        <taxon>Glires</taxon>
        <taxon>Rodentia</taxon>
        <taxon>Myomorpha</taxon>
        <taxon>Muroidea</taxon>
        <taxon>Muridae</taxon>
        <taxon>Gerbillinae</taxon>
        <taxon>Meriones</taxon>
    </lineage>
</organism>
<sequence>MGLSPQLAAVLLCLLVCTGNYARRQDREAGLREIIHNLDQVLKKETPCTEMFVPDVLIATKNTTEKGLLCRATRVLRKFYFPREVTPCLKNNSGVLSILRKLCRSISTLHPQESCSVSTPTLTTLNDFLGRLRGIMQMKNWQG</sequence>
<dbReference type="EMBL" id="L37779">
    <property type="protein sequence ID" value="AAA65678.1"/>
    <property type="molecule type" value="mRNA"/>
</dbReference>
<dbReference type="SMR" id="P47966"/>
<dbReference type="GlyCosmos" id="P47966">
    <property type="glycosylation" value="2 sites, No reported glycans"/>
</dbReference>
<dbReference type="Ensembl" id="ENSMUGT00000025290">
    <property type="protein sequence ID" value="ENSMUGP00000022035"/>
    <property type="gene ID" value="ENSMUGG00000018505"/>
</dbReference>
<dbReference type="OrthoDB" id="9528087at2759"/>
<dbReference type="GO" id="GO:0005615">
    <property type="term" value="C:extracellular space"/>
    <property type="evidence" value="ECO:0007669"/>
    <property type="project" value="UniProtKB-KW"/>
</dbReference>
<dbReference type="GO" id="GO:0005125">
    <property type="term" value="F:cytokine activity"/>
    <property type="evidence" value="ECO:0007669"/>
    <property type="project" value="UniProtKB-KW"/>
</dbReference>
<dbReference type="GO" id="GO:0008083">
    <property type="term" value="F:growth factor activity"/>
    <property type="evidence" value="ECO:0007669"/>
    <property type="project" value="UniProtKB-KW"/>
</dbReference>
<dbReference type="GO" id="GO:0005136">
    <property type="term" value="F:interleukin-4 receptor binding"/>
    <property type="evidence" value="ECO:0007669"/>
    <property type="project" value="InterPro"/>
</dbReference>
<dbReference type="GO" id="GO:0042113">
    <property type="term" value="P:B cell activation"/>
    <property type="evidence" value="ECO:0007669"/>
    <property type="project" value="UniProtKB-KW"/>
</dbReference>
<dbReference type="GO" id="GO:0006955">
    <property type="term" value="P:immune response"/>
    <property type="evidence" value="ECO:0007669"/>
    <property type="project" value="InterPro"/>
</dbReference>
<dbReference type="GO" id="GO:0035771">
    <property type="term" value="P:interleukin-4-mediated signaling pathway"/>
    <property type="evidence" value="ECO:0007669"/>
    <property type="project" value="TreeGrafter"/>
</dbReference>
<dbReference type="GO" id="GO:0050728">
    <property type="term" value="P:negative regulation of inflammatory response"/>
    <property type="evidence" value="ECO:0007669"/>
    <property type="project" value="TreeGrafter"/>
</dbReference>
<dbReference type="GO" id="GO:0045893">
    <property type="term" value="P:positive regulation of DNA-templated transcription"/>
    <property type="evidence" value="ECO:0007669"/>
    <property type="project" value="TreeGrafter"/>
</dbReference>
<dbReference type="GO" id="GO:0016239">
    <property type="term" value="P:positive regulation of macroautophagy"/>
    <property type="evidence" value="ECO:0000250"/>
    <property type="project" value="UniProtKB"/>
</dbReference>
<dbReference type="GO" id="GO:0050776">
    <property type="term" value="P:regulation of immune response"/>
    <property type="evidence" value="ECO:0007669"/>
    <property type="project" value="TreeGrafter"/>
</dbReference>
<dbReference type="FunFam" id="1.20.1250.10:FF:000014">
    <property type="entry name" value="Interleukin-4"/>
    <property type="match status" value="1"/>
</dbReference>
<dbReference type="Gene3D" id="1.20.1250.10">
    <property type="match status" value="1"/>
</dbReference>
<dbReference type="InterPro" id="IPR009079">
    <property type="entry name" value="4_helix_cytokine-like_core"/>
</dbReference>
<dbReference type="InterPro" id="IPR002354">
    <property type="entry name" value="IL-4"/>
</dbReference>
<dbReference type="InterPro" id="IPR001325">
    <property type="entry name" value="IL-4/IL-13"/>
</dbReference>
<dbReference type="InterPro" id="IPR018096">
    <property type="entry name" value="IL-4/IL-13_CS"/>
</dbReference>
<dbReference type="PANTHER" id="PTHR47401">
    <property type="entry name" value="INTERLEUKIN-4"/>
    <property type="match status" value="1"/>
</dbReference>
<dbReference type="PANTHER" id="PTHR47401:SF1">
    <property type="entry name" value="INTERLEUKIN-4"/>
    <property type="match status" value="1"/>
</dbReference>
<dbReference type="Pfam" id="PF00727">
    <property type="entry name" value="IL4"/>
    <property type="match status" value="1"/>
</dbReference>
<dbReference type="PIRSF" id="PIRSF001941">
    <property type="entry name" value="Interleukin_4"/>
    <property type="match status" value="1"/>
</dbReference>
<dbReference type="PRINTS" id="PR00431">
    <property type="entry name" value="INTERLEUKIN4"/>
</dbReference>
<dbReference type="SMART" id="SM00190">
    <property type="entry name" value="IL4_13"/>
    <property type="match status" value="1"/>
</dbReference>
<dbReference type="SUPFAM" id="SSF47266">
    <property type="entry name" value="4-helical cytokines"/>
    <property type="match status" value="1"/>
</dbReference>
<dbReference type="PROSITE" id="PS00838">
    <property type="entry name" value="INTERLEUKIN_4_13"/>
    <property type="match status" value="1"/>
</dbReference>
<gene>
    <name type="primary">IL4</name>
</gene>
<evidence type="ECO:0000250" key="1">
    <source>
        <dbReference type="UniProtKB" id="P07750"/>
    </source>
</evidence>
<evidence type="ECO:0000255" key="2"/>
<evidence type="ECO:0000305" key="3"/>
<protein>
    <recommendedName>
        <fullName>Interleukin-4</fullName>
        <shortName>IL-4</shortName>
    </recommendedName>
    <alternativeName>
        <fullName>B-cell stimulatory factor 1</fullName>
        <shortName>BSF-1</shortName>
    </alternativeName>
    <alternativeName>
        <fullName>Lymphocyte stimulatory factor 1</fullName>
    </alternativeName>
</protein>
<name>IL4_MERUN</name>
<reference key="1">
    <citation type="submission" date="1995-05" db="EMBL/GenBank/DDBJ databases">
        <title>Full length cDNA isolation of gerbil (Meriones unguiculatus) Th1 and Th2 cell cytokines by PCR method as well as their characterization.</title>
        <authorList>
            <person name="Mai Z."/>
            <person name="Klei T.R."/>
        </authorList>
    </citation>
    <scope>NUCLEOTIDE SEQUENCE [MRNA]</scope>
    <source>
        <tissue>Spleen</tissue>
    </source>
</reference>
<accession>P47966</accession>
<comment type="function">
    <text evidence="1">Participates in at least several B-cell activation processes as well as of other cell types. It is a costimulator of DNA-synthesis. It induces the expression of class II MHC molecules on resting B-cells. It enhances both secretion and cell surface expression of IgE and IgG1. It also regulates the expression of the low affinity Fc receptor for IgE (CD23) on both lymphocytes and monocytes. Positively regulates IL31RA expression in macrophages. Stimulates autophagy in dendritic cells by interfering with mTORC1 signaling and through the induction of RUFY4.</text>
</comment>
<comment type="subcellular location">
    <subcellularLocation>
        <location>Secreted</location>
    </subcellularLocation>
</comment>
<comment type="similarity">
    <text evidence="3">Belongs to the IL-4/IL-13 family.</text>
</comment>
<keyword id="KW-0075">B-cell activation</keyword>
<keyword id="KW-0202">Cytokine</keyword>
<keyword id="KW-1015">Disulfide bond</keyword>
<keyword id="KW-0325">Glycoprotein</keyword>
<keyword id="KW-0339">Growth factor</keyword>
<keyword id="KW-0964">Secreted</keyword>
<keyword id="KW-0732">Signal</keyword>
<feature type="signal peptide" evidence="2">
    <location>
        <begin position="1"/>
        <end position="19"/>
    </location>
</feature>
<feature type="chain" id="PRO_0000015536" description="Interleukin-4">
    <location>
        <begin position="20"/>
        <end position="143"/>
    </location>
</feature>
<feature type="glycosylation site" description="N-linked (GlcNAc...) asparagine" evidence="2">
    <location>
        <position position="62"/>
    </location>
</feature>
<feature type="glycosylation site" description="N-linked (GlcNAc...) asparagine" evidence="2">
    <location>
        <position position="91"/>
    </location>
</feature>
<feature type="disulfide bond" evidence="2">
    <location>
        <begin position="48"/>
        <end position="88"/>
    </location>
</feature>
<feature type="disulfide bond" evidence="2">
    <location>
        <begin position="70"/>
        <end position="115"/>
    </location>
</feature>